<organism>
    <name type="scientific">Lilium davidii</name>
    <name type="common">David's lily</name>
    <dbReference type="NCBI Taxonomy" id="82316"/>
    <lineage>
        <taxon>Eukaryota</taxon>
        <taxon>Viridiplantae</taxon>
        <taxon>Streptophyta</taxon>
        <taxon>Embryophyta</taxon>
        <taxon>Tracheophyta</taxon>
        <taxon>Spermatophyta</taxon>
        <taxon>Magnoliopsida</taxon>
        <taxon>Liliopsida</taxon>
        <taxon>Liliales</taxon>
        <taxon>Liliaceae</taxon>
        <taxon>Lilium</taxon>
    </lineage>
</organism>
<feature type="chain" id="PRO_0000252246" description="Villin-like protein ABP41">
    <location>
        <begin position="1"/>
        <end position="146" status="greater than"/>
    </location>
</feature>
<feature type="non-consecutive residues" evidence="3">
    <location>
        <begin position="14"/>
        <end position="15"/>
    </location>
</feature>
<feature type="non-consecutive residues" evidence="3">
    <location>
        <begin position="27"/>
        <end position="28"/>
    </location>
</feature>
<feature type="non-consecutive residues" evidence="3">
    <location>
        <begin position="38"/>
        <end position="39"/>
    </location>
</feature>
<feature type="non-consecutive residues" evidence="3">
    <location>
        <begin position="48"/>
        <end position="49"/>
    </location>
</feature>
<feature type="non-consecutive residues" evidence="3">
    <location>
        <begin position="62"/>
        <end position="63"/>
    </location>
</feature>
<feature type="non-consecutive residues" evidence="3">
    <location>
        <begin position="71"/>
        <end position="72"/>
    </location>
</feature>
<feature type="non-consecutive residues" evidence="3">
    <location>
        <begin position="86"/>
        <end position="87"/>
    </location>
</feature>
<feature type="non-consecutive residues" evidence="3">
    <location>
        <begin position="99"/>
        <end position="100"/>
    </location>
</feature>
<feature type="non-consecutive residues" evidence="3">
    <location>
        <begin position="108"/>
        <end position="109"/>
    </location>
</feature>
<feature type="non-consecutive residues" evidence="3">
    <location>
        <begin position="118"/>
        <end position="119"/>
    </location>
</feature>
<feature type="non-consecutive residues" evidence="3">
    <location>
        <begin position="133"/>
        <end position="134"/>
    </location>
</feature>
<feature type="non-terminal residue" evidence="3">
    <location>
        <position position="146"/>
    </location>
</feature>
<proteinExistence type="evidence at protein level"/>
<accession>P84994</accession>
<keyword id="KW-0117">Actin capping</keyword>
<keyword id="KW-0009">Actin-binding</keyword>
<keyword id="KW-0106">Calcium</keyword>
<keyword id="KW-0963">Cytoplasm</keyword>
<keyword id="KW-0206">Cytoskeleton</keyword>
<keyword id="KW-0903">Direct protein sequencing</keyword>
<reference evidence="4" key="1">
    <citation type="journal article" date="2004" name="Plant Physiol.">
        <title>Identification and characterization of a Ca2+-dependent actin filament-severing protein from lily pollen.</title>
        <authorList>
            <person name="Fan X."/>
            <person name="Hou J."/>
            <person name="Chen X."/>
            <person name="Chaudhry F."/>
            <person name="Staiger C.J."/>
            <person name="Ren H."/>
        </authorList>
    </citation>
    <scope>PROTEIN SEQUENCE</scope>
    <scope>FUNCTION</scope>
    <scope>SUBUNIT</scope>
    <scope>TISSUE SPECIFICITY</scope>
    <scope>DEVELOPMENTAL STAGE</scope>
    <source>
        <tissue evidence="2">Pollen</tissue>
    </source>
</reference>
<sequence>PAFQGVGQRLGTEIESSKDEAATAALKTVELDAVLGGRTPEEETFETRLYQFNGANSNLQERALEVLQYLKVMGDPTVTLETTPGKSAEEFLLDENRPKDVALLDDGRVVEEETMETRLYQFNGANSNLGAERSAEEMLLNENRPK</sequence>
<evidence type="ECO:0000255" key="1"/>
<evidence type="ECO:0000269" key="2">
    <source>
    </source>
</evidence>
<evidence type="ECO:0000303" key="3">
    <source>
    </source>
</evidence>
<evidence type="ECO:0000305" key="4"/>
<comment type="function">
    <text evidence="2">Ca(2+)-dependent actin filament-severing protein that is required for pollen tube growth. Probably regulates the dynamics of the actin cytoskeleton. It can promote the assembly of monomers into filaments (nucleation) as well as sever filaments already formed.</text>
</comment>
<comment type="subunit">
    <text evidence="2">Binds to actin.</text>
</comment>
<comment type="subcellular location">
    <subcellularLocation>
        <location>Cytoplasm</location>
        <location>Cytoskeleton</location>
    </subcellularLocation>
</comment>
<comment type="tissue specificity">
    <text evidence="2">Expressed in pollen (at protein level).</text>
</comment>
<comment type="developmental stage">
    <text evidence="2">Detected at high levels at the tube tip during early pollen germination. In germinated pollen tubes it is localized in a punctate pattern throughout the cytoplasm but most prominently at the tip region.</text>
</comment>
<comment type="similarity">
    <text evidence="1">Belongs to the villin/gelsolin family.</text>
</comment>
<comment type="caution">
    <text evidence="2">The order of the peptides shown is unknown.</text>
</comment>
<name>ABP41_LILDA</name>
<dbReference type="SMR" id="P84994"/>
<dbReference type="GO" id="GO:0005737">
    <property type="term" value="C:cytoplasm"/>
    <property type="evidence" value="ECO:0000314"/>
    <property type="project" value="UniProtKB"/>
</dbReference>
<dbReference type="GO" id="GO:0005856">
    <property type="term" value="C:cytoskeleton"/>
    <property type="evidence" value="ECO:0007669"/>
    <property type="project" value="UniProtKB-SubCell"/>
</dbReference>
<dbReference type="GO" id="GO:0003779">
    <property type="term" value="F:actin binding"/>
    <property type="evidence" value="ECO:0007669"/>
    <property type="project" value="UniProtKB-KW"/>
</dbReference>
<dbReference type="GO" id="GO:0030036">
    <property type="term" value="P:actin cytoskeleton organization"/>
    <property type="evidence" value="ECO:0000314"/>
    <property type="project" value="UniProtKB"/>
</dbReference>
<dbReference type="GO" id="GO:0051693">
    <property type="term" value="P:actin filament capping"/>
    <property type="evidence" value="ECO:0007669"/>
    <property type="project" value="UniProtKB-KW"/>
</dbReference>
<dbReference type="GO" id="GO:0030042">
    <property type="term" value="P:actin filament depolymerization"/>
    <property type="evidence" value="ECO:0000314"/>
    <property type="project" value="UniProtKB"/>
</dbReference>
<dbReference type="GO" id="GO:0030041">
    <property type="term" value="P:actin filament polymerization"/>
    <property type="evidence" value="ECO:0000314"/>
    <property type="project" value="UniProtKB"/>
</dbReference>
<dbReference type="GO" id="GO:0051014">
    <property type="term" value="P:actin filament severing"/>
    <property type="evidence" value="ECO:0000314"/>
    <property type="project" value="UniProtKB"/>
</dbReference>
<dbReference type="GO" id="GO:0009860">
    <property type="term" value="P:pollen tube growth"/>
    <property type="evidence" value="ECO:0000314"/>
    <property type="project" value="UniProtKB"/>
</dbReference>
<protein>
    <recommendedName>
        <fullName>Villin-like protein ABP41</fullName>
    </recommendedName>
    <alternativeName>
        <fullName>Calcium-dependent actin-binding protein ABP41</fullName>
    </alternativeName>
</protein>